<accession>Q9WUH2</accession>
<accession>Q6GQU4</accession>
<accession>Q9QYQ5</accession>
<accession>Q9QYQ6</accession>
<accession>Q9QZ00</accession>
<accession>Q9WU44</accession>
<evidence type="ECO:0000255" key="1">
    <source>
        <dbReference type="PROSITE-ProRule" id="PRU00108"/>
    </source>
</evidence>
<evidence type="ECO:0000255" key="2">
    <source>
        <dbReference type="PROSITE-ProRule" id="PRU00125"/>
    </source>
</evidence>
<evidence type="ECO:0000256" key="3">
    <source>
        <dbReference type="SAM" id="MobiDB-lite"/>
    </source>
</evidence>
<evidence type="ECO:0000269" key="4">
    <source>
    </source>
</evidence>
<evidence type="ECO:0000269" key="5">
    <source>
    </source>
</evidence>
<evidence type="ECO:0000269" key="6">
    <source>
    </source>
</evidence>
<evidence type="ECO:0000303" key="7">
    <source>
    </source>
</evidence>
<evidence type="ECO:0000303" key="8">
    <source>
    </source>
</evidence>
<evidence type="ECO:0000305" key="9"/>
<reference key="1">
    <citation type="journal article" date="2000" name="Genomics">
        <title>Lhx9 and Lhx9alpha LIM-homeodomain factors: genomic structure, expression patterns, chromosomal localization, and phylogenetic analysis.</title>
        <authorList>
            <person name="Failli V."/>
            <person name="Rogard M."/>
            <person name="Mattei M.-G."/>
            <person name="Vernier P."/>
            <person name="Retaux S."/>
        </authorList>
    </citation>
    <scope>NUCLEOTIDE SEQUENCE [MRNA] (ISOFORM 2)</scope>
    <scope>NUCLEOTIDE SEQUENCE [GENOMIC DNA] OF 32-397 (ISOFORM 1/3)</scope>
    <scope>NUCLEOTIDE SEQUENCE [GENOMIC DNA] OF 32-397 (ISOFORM 1/2)</scope>
    <scope>ALTERNATIVE SPLICING</scope>
    <source>
        <strain>C57BL/6J</strain>
        <tissue>Embryonic brain</tissue>
    </source>
</reference>
<reference key="2">
    <citation type="journal article" date="2009" name="PLoS Biol.">
        <title>Lineage-specific biology revealed by a finished genome assembly of the mouse.</title>
        <authorList>
            <person name="Church D.M."/>
            <person name="Goodstadt L."/>
            <person name="Hillier L.W."/>
            <person name="Zody M.C."/>
            <person name="Goldstein S."/>
            <person name="She X."/>
            <person name="Bult C.J."/>
            <person name="Agarwala R."/>
            <person name="Cherry J.L."/>
            <person name="DiCuccio M."/>
            <person name="Hlavina W."/>
            <person name="Kapustin Y."/>
            <person name="Meric P."/>
            <person name="Maglott D."/>
            <person name="Birtle Z."/>
            <person name="Marques A.C."/>
            <person name="Graves T."/>
            <person name="Zhou S."/>
            <person name="Teague B."/>
            <person name="Potamousis K."/>
            <person name="Churas C."/>
            <person name="Place M."/>
            <person name="Herschleb J."/>
            <person name="Runnheim R."/>
            <person name="Forrest D."/>
            <person name="Amos-Landgraf J."/>
            <person name="Schwartz D.C."/>
            <person name="Cheng Z."/>
            <person name="Lindblad-Toh K."/>
            <person name="Eichler E.E."/>
            <person name="Ponting C.P."/>
        </authorList>
    </citation>
    <scope>NUCLEOTIDE SEQUENCE [LARGE SCALE GENOMIC DNA]</scope>
    <source>
        <strain>C57BL/6J</strain>
    </source>
</reference>
<reference key="3">
    <citation type="journal article" date="2004" name="Genome Res.">
        <title>The status, quality, and expansion of the NIH full-length cDNA project: the Mammalian Gene Collection (MGC).</title>
        <authorList>
            <consortium name="The MGC Project Team"/>
        </authorList>
    </citation>
    <scope>NUCLEOTIDE SEQUENCE [LARGE SCALE MRNA] (ISOFORM 4)</scope>
    <source>
        <strain>C57BL/6J</strain>
        <tissue>Brain</tissue>
    </source>
</reference>
<reference key="4">
    <citation type="journal article" date="1999" name="J. Neurosci.">
        <title>Lhx9: a novel LIM-homeodomain gene expressed in the developing forebrain.</title>
        <authorList>
            <person name="Retaux S."/>
            <person name="Rogard M."/>
            <person name="Bach I."/>
            <person name="Failli V."/>
            <person name="Besson M.-J."/>
        </authorList>
    </citation>
    <scope>NUCLEOTIDE SEQUENCE [MRNA] OF 1-309 (ISOFORM 1/2)</scope>
    <scope>INTERACTION WITH LDB1 AND LDB2</scope>
    <scope>TISSUE SPECIFICITY</scope>
    <scope>DEVELOPMENTAL STAGE</scope>
    <source>
        <strain>C57BL/6J</strain>
        <tissue>Embryonic head</tissue>
    </source>
</reference>
<reference key="5">
    <citation type="journal article" date="1999" name="Mech. Dev.">
        <title>Characterization of Lhx9, a novel LIM/homeobox gene expressed by the pioneer neurons in the mouse cerebral cortex.</title>
        <authorList>
            <person name="Bertuzzi S."/>
            <person name="Porter F.D."/>
            <person name="Pitts A."/>
            <person name="Kumar M."/>
            <person name="Agulnick A."/>
            <person name="Wassif C."/>
            <person name="Westphal H."/>
        </authorList>
    </citation>
    <scope>NUCLEOTIDE SEQUENCE [MRNA] OF 20-397 (ISOFORM 1/3)</scope>
    <scope>INTERACTION WITH LDB1</scope>
    <scope>DEVELOPMENTAL STAGE</scope>
    <source>
        <strain>NIH Swiss</strain>
    </source>
</reference>
<reference key="6">
    <citation type="journal article" date="2000" name="Nature">
        <title>The LIM homeobox gene Lhx9 is essential for mouse gonad formation.</title>
        <authorList>
            <person name="Birk O.S."/>
            <person name="Casiano D.E."/>
            <person name="Wassif C.A."/>
            <person name="Cogliati T."/>
            <person name="Zhao L."/>
            <person name="Zhao Y."/>
            <person name="Grinberg A."/>
            <person name="Huang S."/>
            <person name="Kreidberg J.A."/>
            <person name="Parker K.L."/>
            <person name="Porter F.D."/>
            <person name="Westphal H."/>
        </authorList>
    </citation>
    <scope>FUNCTION</scope>
    <scope>SUBCELLULAR LOCATION</scope>
    <scope>DEVELOPMENTAL STAGE</scope>
</reference>
<keyword id="KW-0025">Alternative splicing</keyword>
<keyword id="KW-0238">DNA-binding</keyword>
<keyword id="KW-0371">Homeobox</keyword>
<keyword id="KW-0440">LIM domain</keyword>
<keyword id="KW-0479">Metal-binding</keyword>
<keyword id="KW-0539">Nucleus</keyword>
<keyword id="KW-1185">Reference proteome</keyword>
<keyword id="KW-0677">Repeat</keyword>
<keyword id="KW-0862">Zinc</keyword>
<name>LHX9_MOUSE</name>
<sequence length="397" mass="44045">MEIVGCRAENNSCPFRPPAMLFHGISGGHIQGIMEEMERRSKTEARLTKGTQLNGRDAGMPPLSPEKPALCAGCGGKISDRYYLLAVDKQWHLRCLKCCECKLALESELTCFAKDGSIYCKEDYYRRFSVQRCARCHLGISASEMVMRARDSVYHLSCFTCSTCNKTLTTGDHFGMKDSLVYCRAHFETLLQGEYPPQLSYTELAAKSGGLALPYFNGTGTVQKGRPRKRKSPALGVDIVNYNSGCNENEADHLDRDQQPYPPSQKTKRMRTSFKHHQLRTMKSYFAINHNPDAKDLKQLAQKTGLTKRVLQVWFQNARAKFRRNLLRQENGGVDKADGTSLPAPPSADSGALTPPGTATTLTDLTNPTVTVVTTVTSNMDSHEPGSPSQTTLTNLF</sequence>
<gene>
    <name type="primary">Lhx9</name>
</gene>
<comment type="function">
    <text evidence="5">Involved in gonadal development.</text>
</comment>
<comment type="subunit">
    <text evidence="4 6">Interacts with LDB1 and LDB2.</text>
</comment>
<comment type="interaction">
    <interactant intactId="EBI-309943">
        <id>Q9WUH2</id>
    </interactant>
    <interactant intactId="EBI-309962">
        <id>Q9CYZ8</id>
        <label>Ssbp2</label>
    </interactant>
    <organismsDiffer>false</organismsDiffer>
    <experiments>3</experiments>
</comment>
<comment type="subcellular location">
    <subcellularLocation>
        <location evidence="1 5">Nucleus</location>
    </subcellularLocation>
</comment>
<comment type="alternative products">
    <event type="alternative splicing"/>
    <isoform>
        <id>Q9WUH2-3</id>
        <name>3</name>
        <sequence type="displayed"/>
    </isoform>
    <isoform>
        <id>Q9WUH2-1</id>
        <name>1</name>
        <name>Beta</name>
        <sequence type="described" ref="VSP_036430"/>
    </isoform>
    <isoform>
        <id>Q9WUH2-2</id>
        <name>2</name>
        <name>Alpha</name>
        <sequence type="described" ref="VSP_036430 VSP_036431"/>
    </isoform>
    <isoform>
        <id>Q9WUH2-4</id>
        <name>4</name>
        <sequence type="described" ref="VSP_036431"/>
    </isoform>
</comment>
<comment type="tissue specificity">
    <text evidence="6">Expressed in the dorsal thalamus and inner nuclei of the cerebellum.</text>
</comment>
<comment type="developmental stage">
    <text evidence="4 5 6">Expressed in urogenital ridges of mice at 9.5 dpc. Expressed in the nervous system at 10.5 dpc. Expressed in the forelimb and hindlimb buds, the caelomic cavity at the level of the urogenital ridge, including the gonads, the pancreas and liver epithelium at 11.5 dpc. Expressed widespread throughout the CNS alar neuroepithelium from 11.5 to 14.5 dpc. Expressed in pioneer neurons of the cerebral cortex. In the telencephalic vesicles, expressed in cerebral cortex, the hippocampus, the claustrum primordium, olfactory bulb primordium and the caudal ganglionic eminence (amygdaloid complex) at 13.5 dpc. In the diencephalon, expressed in the pretectum (p1 prosomere), the dorsal thalamus (except for a thin ventral band close to the alar-basal boundary), the epithalamus, the epiphysis in prosomere p2, the supraoptic-paraventricular area, the eminentia thalami (p4 prosomere), the retrochiasmatic area and the tuberal hypothalamus at 13.5 dpc. In the mesencephalon, expressed in the tectum, the walls of the hindbrain, in nuclei of the ventral midbrain and hindbrain at 13.5 dpc. In the spinal cord, expressed as a gradient in the dorsal part of the neuroepithelium at 13.5 dpc. In the neocortical neuroepithelium, expressed in the archicortex (in the dentate gyrus, CA3 and CA4), the diencephalon, the midbrain and hindbrain at 14.5 and 16.5 dpc.</text>
</comment>
<organism>
    <name type="scientific">Mus musculus</name>
    <name type="common">Mouse</name>
    <dbReference type="NCBI Taxonomy" id="10090"/>
    <lineage>
        <taxon>Eukaryota</taxon>
        <taxon>Metazoa</taxon>
        <taxon>Chordata</taxon>
        <taxon>Craniata</taxon>
        <taxon>Vertebrata</taxon>
        <taxon>Euteleostomi</taxon>
        <taxon>Mammalia</taxon>
        <taxon>Eutheria</taxon>
        <taxon>Euarchontoglires</taxon>
        <taxon>Glires</taxon>
        <taxon>Rodentia</taxon>
        <taxon>Myomorpha</taxon>
        <taxon>Muroidea</taxon>
        <taxon>Muridae</taxon>
        <taxon>Murinae</taxon>
        <taxon>Mus</taxon>
        <taxon>Mus</taxon>
    </lineage>
</organism>
<dbReference type="EMBL" id="AJ243851">
    <property type="protein sequence ID" value="CAB59907.1"/>
    <property type="molecule type" value="mRNA"/>
</dbReference>
<dbReference type="EMBL" id="AJ243852">
    <property type="protein sequence ID" value="CAB59908.1"/>
    <property type="molecule type" value="Genomic_DNA"/>
</dbReference>
<dbReference type="EMBL" id="AJ243853">
    <property type="protein sequence ID" value="CAB59908.1"/>
    <property type="status" value="JOINED"/>
    <property type="molecule type" value="Genomic_DNA"/>
</dbReference>
<dbReference type="EMBL" id="AJ243854">
    <property type="protein sequence ID" value="CAB59908.1"/>
    <property type="status" value="JOINED"/>
    <property type="molecule type" value="Genomic_DNA"/>
</dbReference>
<dbReference type="EMBL" id="AJ243855">
    <property type="protein sequence ID" value="CAB59908.1"/>
    <property type="status" value="JOINED"/>
    <property type="molecule type" value="Genomic_DNA"/>
</dbReference>
<dbReference type="EMBL" id="AJ243856">
    <property type="protein sequence ID" value="CAB59908.1"/>
    <property type="status" value="JOINED"/>
    <property type="molecule type" value="Genomic_DNA"/>
</dbReference>
<dbReference type="EMBL" id="AJ243852">
    <property type="protein sequence ID" value="CAB59909.1"/>
    <property type="molecule type" value="Genomic_DNA"/>
</dbReference>
<dbReference type="EMBL" id="AJ243853">
    <property type="protein sequence ID" value="CAB59909.1"/>
    <property type="status" value="JOINED"/>
    <property type="molecule type" value="Genomic_DNA"/>
</dbReference>
<dbReference type="EMBL" id="AJ243854">
    <property type="protein sequence ID" value="CAB59909.1"/>
    <property type="status" value="JOINED"/>
    <property type="molecule type" value="Genomic_DNA"/>
</dbReference>
<dbReference type="EMBL" id="AJ243855">
    <property type="protein sequence ID" value="CAB59909.1"/>
    <property type="status" value="JOINED"/>
    <property type="molecule type" value="Genomic_DNA"/>
</dbReference>
<dbReference type="EMBL" id="AJ243857">
    <property type="protein sequence ID" value="CAB59909.1"/>
    <property type="status" value="JOINED"/>
    <property type="molecule type" value="Genomic_DNA"/>
</dbReference>
<dbReference type="EMBL" id="AC154398">
    <property type="status" value="NOT_ANNOTATED_CDS"/>
    <property type="molecule type" value="Genomic_DNA"/>
</dbReference>
<dbReference type="EMBL" id="BC072623">
    <property type="protein sequence ID" value="AAH72623.1"/>
    <property type="molecule type" value="mRNA"/>
</dbReference>
<dbReference type="EMBL" id="AF134761">
    <property type="protein sequence ID" value="AAD30110.1"/>
    <property type="molecule type" value="mRNA"/>
</dbReference>
<dbReference type="EMBL" id="AF113518">
    <property type="protein sequence ID" value="AAD22008.1"/>
    <property type="molecule type" value="mRNA"/>
</dbReference>
<dbReference type="CCDS" id="CCDS15333.1">
    <molecule id="Q9WUH2-2"/>
</dbReference>
<dbReference type="CCDS" id="CCDS15334.1">
    <molecule id="Q9WUH2-4"/>
</dbReference>
<dbReference type="CCDS" id="CCDS35726.1">
    <molecule id="Q9WUH2-3"/>
</dbReference>
<dbReference type="RefSeq" id="NP_001020736.1">
    <molecule id="Q9WUH2-4"/>
    <property type="nucleotide sequence ID" value="NM_001025565.2"/>
</dbReference>
<dbReference type="RefSeq" id="NP_001036042.1">
    <molecule id="Q9WUH2-3"/>
    <property type="nucleotide sequence ID" value="NM_001042577.1"/>
</dbReference>
<dbReference type="RefSeq" id="NP_034844.1">
    <molecule id="Q9WUH2-2"/>
    <property type="nucleotide sequence ID" value="NM_010714.3"/>
</dbReference>
<dbReference type="RefSeq" id="XP_006529234.1">
    <molecule id="Q9WUH2-1"/>
    <property type="nucleotide sequence ID" value="XM_006529171.3"/>
</dbReference>
<dbReference type="RefSeq" id="XP_006529235.1">
    <molecule id="Q9WUH2-1"/>
    <property type="nucleotide sequence ID" value="XM_006529172.5"/>
</dbReference>
<dbReference type="RefSeq" id="XP_006529236.1">
    <molecule id="Q9WUH2-1"/>
    <property type="nucleotide sequence ID" value="XM_006529173.4"/>
</dbReference>
<dbReference type="RefSeq" id="XP_017174117.1">
    <property type="nucleotide sequence ID" value="XM_017318628.1"/>
</dbReference>
<dbReference type="RefSeq" id="XP_017174126.1">
    <molecule id="Q9WUH2-2"/>
    <property type="nucleotide sequence ID" value="XM_017318637.2"/>
</dbReference>
<dbReference type="RefSeq" id="XP_030107556.1">
    <molecule id="Q9WUH2-1"/>
    <property type="nucleotide sequence ID" value="XM_030251696.1"/>
</dbReference>
<dbReference type="RefSeq" id="XP_030107583.1">
    <molecule id="Q9WUH2-2"/>
    <property type="nucleotide sequence ID" value="XM_030251723.1"/>
</dbReference>
<dbReference type="RefSeq" id="XP_030107584.1">
    <molecule id="Q9WUH2-2"/>
    <property type="nucleotide sequence ID" value="XM_030251724.1"/>
</dbReference>
<dbReference type="RefSeq" id="XP_030107586.1">
    <molecule id="Q9WUH2-2"/>
    <property type="nucleotide sequence ID" value="XM_030251726.2"/>
</dbReference>
<dbReference type="SMR" id="Q9WUH2"/>
<dbReference type="BioGRID" id="201161">
    <property type="interactions" value="9"/>
</dbReference>
<dbReference type="FunCoup" id="Q9WUH2">
    <property type="interactions" value="1713"/>
</dbReference>
<dbReference type="IntAct" id="Q9WUH2">
    <property type="interactions" value="7"/>
</dbReference>
<dbReference type="MINT" id="Q9WUH2"/>
<dbReference type="STRING" id="10090.ENSMUSP00000107657"/>
<dbReference type="iPTMnet" id="Q9WUH2"/>
<dbReference type="PhosphoSitePlus" id="Q9WUH2"/>
<dbReference type="PaxDb" id="10090-ENSMUSP00000107657"/>
<dbReference type="PeptideAtlas" id="Q9WUH2"/>
<dbReference type="ProteomicsDB" id="291948">
    <molecule id="Q9WUH2-3"/>
</dbReference>
<dbReference type="ProteomicsDB" id="291949">
    <molecule id="Q9WUH2-1"/>
</dbReference>
<dbReference type="ProteomicsDB" id="291950">
    <molecule id="Q9WUH2-2"/>
</dbReference>
<dbReference type="ProteomicsDB" id="291951">
    <molecule id="Q9WUH2-4"/>
</dbReference>
<dbReference type="Antibodypedia" id="1450">
    <property type="antibodies" value="93 antibodies from 18 providers"/>
</dbReference>
<dbReference type="DNASU" id="16876"/>
<dbReference type="Ensembl" id="ENSMUST00000019374.14">
    <molecule id="Q9WUH2-4"/>
    <property type="protein sequence ID" value="ENSMUSP00000019374.8"/>
    <property type="gene ID" value="ENSMUSG00000019230.15"/>
</dbReference>
<dbReference type="Ensembl" id="ENSMUST00000046870.13">
    <molecule id="Q9WUH2-1"/>
    <property type="protein sequence ID" value="ENSMUSP00000036480.7"/>
    <property type="gene ID" value="ENSMUSG00000019230.15"/>
</dbReference>
<dbReference type="Ensembl" id="ENSMUST00000093486.10">
    <molecule id="Q9WUH2-2"/>
    <property type="protein sequence ID" value="ENSMUSP00000091198.4"/>
    <property type="gene ID" value="ENSMUSG00000019230.15"/>
</dbReference>
<dbReference type="Ensembl" id="ENSMUST00000112026.4">
    <molecule id="Q9WUH2-3"/>
    <property type="protein sequence ID" value="ENSMUSP00000107657.3"/>
    <property type="gene ID" value="ENSMUSG00000019230.15"/>
</dbReference>
<dbReference type="Ensembl" id="ENSMUST00000112030.9">
    <molecule id="Q9WUH2-2"/>
    <property type="protein sequence ID" value="ENSMUSP00000107661.3"/>
    <property type="gene ID" value="ENSMUSG00000019230.15"/>
</dbReference>
<dbReference type="GeneID" id="16876"/>
<dbReference type="KEGG" id="mmu:16876"/>
<dbReference type="UCSC" id="uc007cvr.1">
    <molecule id="Q9WUH2-4"/>
    <property type="organism name" value="mouse"/>
</dbReference>
<dbReference type="UCSC" id="uc007cvs.1">
    <molecule id="Q9WUH2-2"/>
    <property type="organism name" value="mouse"/>
</dbReference>
<dbReference type="UCSC" id="uc007cvu.2">
    <molecule id="Q9WUH2-3"/>
    <property type="organism name" value="mouse"/>
</dbReference>
<dbReference type="AGR" id="MGI:1316721"/>
<dbReference type="CTD" id="56956"/>
<dbReference type="MGI" id="MGI:1316721">
    <property type="gene designation" value="Lhx9"/>
</dbReference>
<dbReference type="VEuPathDB" id="HostDB:ENSMUSG00000019230"/>
<dbReference type="eggNOG" id="KOG0490">
    <property type="taxonomic scope" value="Eukaryota"/>
</dbReference>
<dbReference type="GeneTree" id="ENSGT00940000158821"/>
<dbReference type="HOGENOM" id="CLU_027802_4_1_1"/>
<dbReference type="InParanoid" id="Q9WUH2"/>
<dbReference type="OMA" id="LICCECK"/>
<dbReference type="OrthoDB" id="9990008at2759"/>
<dbReference type="PhylomeDB" id="Q9WUH2"/>
<dbReference type="TreeFam" id="TF315442"/>
<dbReference type="BioGRID-ORCS" id="16876">
    <property type="hits" value="2 hits in 78 CRISPR screens"/>
</dbReference>
<dbReference type="ChiTaRS" id="Lhx9">
    <property type="organism name" value="mouse"/>
</dbReference>
<dbReference type="PRO" id="PR:Q9WUH2"/>
<dbReference type="Proteomes" id="UP000000589">
    <property type="component" value="Chromosome 1"/>
</dbReference>
<dbReference type="RNAct" id="Q9WUH2">
    <property type="molecule type" value="protein"/>
</dbReference>
<dbReference type="Bgee" id="ENSMUSG00000019230">
    <property type="expression patterns" value="Expressed in indifferent gonad and 119 other cell types or tissues"/>
</dbReference>
<dbReference type="ExpressionAtlas" id="Q9WUH2">
    <property type="expression patterns" value="baseline and differential"/>
</dbReference>
<dbReference type="GO" id="GO:0005634">
    <property type="term" value="C:nucleus"/>
    <property type="evidence" value="ECO:0007669"/>
    <property type="project" value="UniProtKB-SubCell"/>
</dbReference>
<dbReference type="GO" id="GO:0000981">
    <property type="term" value="F:DNA-binding transcription factor activity, RNA polymerase II-specific"/>
    <property type="evidence" value="ECO:0007669"/>
    <property type="project" value="InterPro"/>
</dbReference>
<dbReference type="GO" id="GO:0046872">
    <property type="term" value="F:metal ion binding"/>
    <property type="evidence" value="ECO:0007669"/>
    <property type="project" value="UniProtKB-KW"/>
</dbReference>
<dbReference type="GO" id="GO:1990837">
    <property type="term" value="F:sequence-specific double-stranded DNA binding"/>
    <property type="evidence" value="ECO:0007669"/>
    <property type="project" value="Ensembl"/>
</dbReference>
<dbReference type="GO" id="GO:0008283">
    <property type="term" value="P:cell population proliferation"/>
    <property type="evidence" value="ECO:0000315"/>
    <property type="project" value="MGI"/>
</dbReference>
<dbReference type="GO" id="GO:0097380">
    <property type="term" value="P:dorsal spinal cord interneuron anterior axon guidance"/>
    <property type="evidence" value="ECO:0000250"/>
    <property type="project" value="UniProtKB"/>
</dbReference>
<dbReference type="GO" id="GO:0008585">
    <property type="term" value="P:female gonad development"/>
    <property type="evidence" value="ECO:0000315"/>
    <property type="project" value="MGI"/>
</dbReference>
<dbReference type="GO" id="GO:0035262">
    <property type="term" value="P:gonad morphogenesis"/>
    <property type="evidence" value="ECO:0000315"/>
    <property type="project" value="MGI"/>
</dbReference>
<dbReference type="GO" id="GO:0008584">
    <property type="term" value="P:male gonad development"/>
    <property type="evidence" value="ECO:0000315"/>
    <property type="project" value="MGI"/>
</dbReference>
<dbReference type="GO" id="GO:0045892">
    <property type="term" value="P:negative regulation of DNA-templated transcription"/>
    <property type="evidence" value="ECO:0000250"/>
    <property type="project" value="UniProtKB"/>
</dbReference>
<dbReference type="CDD" id="cd00086">
    <property type="entry name" value="homeodomain"/>
    <property type="match status" value="1"/>
</dbReference>
<dbReference type="CDD" id="cd09469">
    <property type="entry name" value="LIM1_Lhx2"/>
    <property type="match status" value="1"/>
</dbReference>
<dbReference type="CDD" id="cd09377">
    <property type="entry name" value="LIM2_Lhx2_Lhx9"/>
    <property type="match status" value="1"/>
</dbReference>
<dbReference type="FunFam" id="1.10.10.60:FF:000027">
    <property type="entry name" value="LIM/homeobox protein Lhx9"/>
    <property type="match status" value="1"/>
</dbReference>
<dbReference type="FunFam" id="2.10.110.10:FF:000039">
    <property type="entry name" value="LIM/homeobox protein Lhx9 isoform 2"/>
    <property type="match status" value="1"/>
</dbReference>
<dbReference type="FunFam" id="2.10.110.10:FF:000033">
    <property type="entry name" value="LIM/homeobox protein Lhx9 isoform X2"/>
    <property type="match status" value="1"/>
</dbReference>
<dbReference type="Gene3D" id="2.10.110.10">
    <property type="entry name" value="Cysteine Rich Protein"/>
    <property type="match status" value="2"/>
</dbReference>
<dbReference type="Gene3D" id="1.10.10.60">
    <property type="entry name" value="Homeodomain-like"/>
    <property type="match status" value="1"/>
</dbReference>
<dbReference type="InterPro" id="IPR001356">
    <property type="entry name" value="HD"/>
</dbReference>
<dbReference type="InterPro" id="IPR017970">
    <property type="entry name" value="Homeobox_CS"/>
</dbReference>
<dbReference type="InterPro" id="IPR009057">
    <property type="entry name" value="Homeodomain-like_sf"/>
</dbReference>
<dbReference type="InterPro" id="IPR050453">
    <property type="entry name" value="LIM_Homeobox_TF"/>
</dbReference>
<dbReference type="InterPro" id="IPR001781">
    <property type="entry name" value="Znf_LIM"/>
</dbReference>
<dbReference type="PANTHER" id="PTHR24208">
    <property type="entry name" value="LIM/HOMEOBOX PROTEIN LHX"/>
    <property type="match status" value="1"/>
</dbReference>
<dbReference type="PANTHER" id="PTHR24208:SF95">
    <property type="entry name" value="LIM_HOMEOBOX PROTEIN LHX9"/>
    <property type="match status" value="1"/>
</dbReference>
<dbReference type="Pfam" id="PF00046">
    <property type="entry name" value="Homeodomain"/>
    <property type="match status" value="1"/>
</dbReference>
<dbReference type="Pfam" id="PF00412">
    <property type="entry name" value="LIM"/>
    <property type="match status" value="2"/>
</dbReference>
<dbReference type="SMART" id="SM00389">
    <property type="entry name" value="HOX"/>
    <property type="match status" value="1"/>
</dbReference>
<dbReference type="SMART" id="SM00132">
    <property type="entry name" value="LIM"/>
    <property type="match status" value="2"/>
</dbReference>
<dbReference type="SUPFAM" id="SSF57716">
    <property type="entry name" value="Glucocorticoid receptor-like (DNA-binding domain)"/>
    <property type="match status" value="2"/>
</dbReference>
<dbReference type="SUPFAM" id="SSF46689">
    <property type="entry name" value="Homeodomain-like"/>
    <property type="match status" value="1"/>
</dbReference>
<dbReference type="PROSITE" id="PS00027">
    <property type="entry name" value="HOMEOBOX_1"/>
    <property type="match status" value="1"/>
</dbReference>
<dbReference type="PROSITE" id="PS50071">
    <property type="entry name" value="HOMEOBOX_2"/>
    <property type="match status" value="1"/>
</dbReference>
<dbReference type="PROSITE" id="PS00478">
    <property type="entry name" value="LIM_DOMAIN_1"/>
    <property type="match status" value="2"/>
</dbReference>
<dbReference type="PROSITE" id="PS50023">
    <property type="entry name" value="LIM_DOMAIN_2"/>
    <property type="match status" value="2"/>
</dbReference>
<proteinExistence type="evidence at protein level"/>
<protein>
    <recommendedName>
        <fullName>LIM/homeobox protein Lhx9</fullName>
        <shortName>LIM homeobox protein 9</shortName>
    </recommendedName>
</protein>
<feature type="chain" id="PRO_0000075799" description="LIM/homeobox protein Lhx9">
    <location>
        <begin position="1"/>
        <end position="397"/>
    </location>
</feature>
<feature type="domain" description="LIM zinc-binding 1" evidence="2">
    <location>
        <begin position="69"/>
        <end position="130"/>
    </location>
</feature>
<feature type="domain" description="LIM zinc-binding 2" evidence="2">
    <location>
        <begin position="131"/>
        <end position="193"/>
    </location>
</feature>
<feature type="DNA-binding region" description="Homeobox" evidence="1">
    <location>
        <begin position="267"/>
        <end position="326"/>
    </location>
</feature>
<feature type="region of interest" description="Disordered" evidence="3">
    <location>
        <begin position="248"/>
        <end position="272"/>
    </location>
</feature>
<feature type="region of interest" description="Disordered" evidence="3">
    <location>
        <begin position="330"/>
        <end position="365"/>
    </location>
</feature>
<feature type="region of interest" description="Disordered" evidence="3">
    <location>
        <begin position="378"/>
        <end position="397"/>
    </location>
</feature>
<feature type="compositionally biased region" description="Low complexity" evidence="3">
    <location>
        <begin position="353"/>
        <end position="365"/>
    </location>
</feature>
<feature type="compositionally biased region" description="Polar residues" evidence="3">
    <location>
        <begin position="387"/>
        <end position="397"/>
    </location>
</feature>
<feature type="splice variant" id="VSP_036430" description="In isoform 1 and isoform 2." evidence="7">
    <original>MEIVGCRAENNSCPFRPP</original>
    <variation>MLNGTTLEA</variation>
    <location>
        <begin position="1"/>
        <end position="18"/>
    </location>
</feature>
<feature type="splice variant" id="VSP_036431" description="In isoform 2 and isoform 4." evidence="7 8">
    <original>VWFQNARAKFRRNLLRQENGGVDKADGTSLPAPPSADSGALTPPGTATTLTDLTNPTVTVVTTVTSNMDSHEPGSPSQTTLTNLF</original>
    <variation>GEQILGHYSQTSRRLKIP</variation>
    <location>
        <begin position="313"/>
        <end position="397"/>
    </location>
</feature>
<feature type="sequence conflict" description="In Ref. 5; AAD22008." evidence="9" ref="5">
    <original>A</original>
    <variation>T</variation>
    <location>
        <position position="58"/>
    </location>
</feature>
<feature type="sequence conflict" description="In Ref. 5; AAD22008." evidence="9" ref="5">
    <original>S</original>
    <variation>F</variation>
    <location>
        <position position="162"/>
    </location>
</feature>
<feature type="sequence conflict" description="In Ref. 1; CAB59908 and 5; AAD22008." evidence="9" ref="1 5">
    <original>T</original>
    <variation>I</variation>
    <location>
        <position position="377"/>
    </location>
</feature>